<evidence type="ECO:0000255" key="1">
    <source>
        <dbReference type="PROSITE-ProRule" id="PRU00981"/>
    </source>
</evidence>
<evidence type="ECO:0000256" key="2">
    <source>
        <dbReference type="SAM" id="MobiDB-lite"/>
    </source>
</evidence>
<evidence type="ECO:0000269" key="3">
    <source>
    </source>
</evidence>
<evidence type="ECO:0000303" key="4">
    <source>
    </source>
</evidence>
<evidence type="ECO:0000303" key="5">
    <source>
    </source>
</evidence>
<evidence type="ECO:0000305" key="6"/>
<dbReference type="EMBL" id="CM001069">
    <property type="status" value="NOT_ANNOTATED_CDS"/>
    <property type="molecule type" value="Genomic_DNA"/>
</dbReference>
<dbReference type="SMR" id="A0A3Q7H216"/>
<dbReference type="FunCoup" id="A0A3Q7H216">
    <property type="interactions" value="1193"/>
</dbReference>
<dbReference type="STRING" id="4081.A0A3Q7H216"/>
<dbReference type="PaxDb" id="4081-Solyc06g083980.1.1"/>
<dbReference type="EnsemblPlants" id="Solyc06g083980.2.1">
    <property type="protein sequence ID" value="Solyc06g083980.2.1"/>
    <property type="gene ID" value="Solyc06g083980.2"/>
</dbReference>
<dbReference type="Gramene" id="Solyc06g083980.2.1">
    <property type="protein sequence ID" value="Solyc06g083980.2.1"/>
    <property type="gene ID" value="Solyc06g083980.2"/>
</dbReference>
<dbReference type="InParanoid" id="A0A3Q7H216"/>
<dbReference type="OMA" id="ALCKIVE"/>
<dbReference type="Proteomes" id="UP000004994">
    <property type="component" value="Chromosome 6"/>
</dbReference>
<dbReference type="GO" id="GO:0005634">
    <property type="term" value="C:nucleus"/>
    <property type="evidence" value="ECO:0000318"/>
    <property type="project" value="GO_Central"/>
</dbReference>
<dbReference type="GO" id="GO:0003700">
    <property type="term" value="F:DNA-binding transcription factor activity"/>
    <property type="evidence" value="ECO:0000318"/>
    <property type="project" value="GO_Central"/>
</dbReference>
<dbReference type="GO" id="GO:0046983">
    <property type="term" value="F:protein dimerization activity"/>
    <property type="evidence" value="ECO:0007669"/>
    <property type="project" value="InterPro"/>
</dbReference>
<dbReference type="GO" id="GO:0000976">
    <property type="term" value="F:transcription cis-regulatory region binding"/>
    <property type="evidence" value="ECO:0000318"/>
    <property type="project" value="GO_Central"/>
</dbReference>
<dbReference type="GO" id="GO:0006952">
    <property type="term" value="P:defense response"/>
    <property type="evidence" value="ECO:0007669"/>
    <property type="project" value="UniProtKB-KW"/>
</dbReference>
<dbReference type="GO" id="GO:0010629">
    <property type="term" value="P:negative regulation of gene expression"/>
    <property type="evidence" value="ECO:0007669"/>
    <property type="project" value="EnsemblPlants"/>
</dbReference>
<dbReference type="GO" id="GO:0031347">
    <property type="term" value="P:regulation of defense response"/>
    <property type="evidence" value="ECO:0000315"/>
    <property type="project" value="UniProtKB"/>
</dbReference>
<dbReference type="GO" id="GO:0006355">
    <property type="term" value="P:regulation of DNA-templated transcription"/>
    <property type="evidence" value="ECO:0000314"/>
    <property type="project" value="UniProtKB"/>
</dbReference>
<dbReference type="GO" id="GO:2000022">
    <property type="term" value="P:regulation of jasmonic acid mediated signaling pathway"/>
    <property type="evidence" value="ECO:0000315"/>
    <property type="project" value="UniProtKB"/>
</dbReference>
<dbReference type="CDD" id="cd11449">
    <property type="entry name" value="bHLH_AtAIB_like"/>
    <property type="match status" value="1"/>
</dbReference>
<dbReference type="FunFam" id="4.10.280.10:FF:000078">
    <property type="entry name" value="Transcription factor bHLH13"/>
    <property type="match status" value="1"/>
</dbReference>
<dbReference type="Gene3D" id="4.10.280.10">
    <property type="entry name" value="Helix-loop-helix DNA-binding domain"/>
    <property type="match status" value="1"/>
</dbReference>
<dbReference type="InterPro" id="IPR045084">
    <property type="entry name" value="AIB/MYC-like"/>
</dbReference>
<dbReference type="InterPro" id="IPR011598">
    <property type="entry name" value="bHLH_dom"/>
</dbReference>
<dbReference type="InterPro" id="IPR036638">
    <property type="entry name" value="HLH_DNA-bd_sf"/>
</dbReference>
<dbReference type="InterPro" id="IPR025610">
    <property type="entry name" value="MYC/MYB_N"/>
</dbReference>
<dbReference type="PANTHER" id="PTHR11514">
    <property type="entry name" value="MYC"/>
    <property type="match status" value="1"/>
</dbReference>
<dbReference type="PANTHER" id="PTHR11514:SF53">
    <property type="entry name" value="TRANSCRIPTION FACTOR BHLH3"/>
    <property type="match status" value="1"/>
</dbReference>
<dbReference type="Pfam" id="PF14215">
    <property type="entry name" value="bHLH-MYC_N"/>
    <property type="match status" value="1"/>
</dbReference>
<dbReference type="Pfam" id="PF00010">
    <property type="entry name" value="HLH"/>
    <property type="match status" value="1"/>
</dbReference>
<dbReference type="SMART" id="SM00353">
    <property type="entry name" value="HLH"/>
    <property type="match status" value="1"/>
</dbReference>
<dbReference type="SUPFAM" id="SSF47459">
    <property type="entry name" value="HLH, helix-loop-helix DNA-binding domain"/>
    <property type="match status" value="1"/>
</dbReference>
<dbReference type="PROSITE" id="PS50888">
    <property type="entry name" value="BHLH"/>
    <property type="match status" value="1"/>
</dbReference>
<reference key="1">
    <citation type="journal article" date="2012" name="Nature">
        <title>The tomato genome sequence provides insights into fleshy fruit evolution.</title>
        <authorList>
            <consortium name="Tomato Genome Consortium"/>
        </authorList>
    </citation>
    <scope>NUCLEOTIDE SEQUENCE [LARGE SCALE GENOMIC DNA]</scope>
    <scope>IDENTIFICATION</scope>
    <source>
        <strain>cv. Heinz 1706</strain>
    </source>
</reference>
<reference key="2">
    <citation type="journal article" date="2015" name="BMC Genomics">
        <title>Genome-wide identification and characterization of the bHLH gene family in tomato.</title>
        <authorList>
            <person name="Sun H."/>
            <person name="Fan H.J."/>
            <person name="Ling H.Q."/>
        </authorList>
    </citation>
    <scope>GENE FAMILY</scope>
    <scope>NOMENCLATURE</scope>
</reference>
<reference key="3">
    <citation type="journal article" date="2019" name="Plant Cell">
        <title>MYC2 regulates the termination of jasmonate signaling via an autoregulatory negative feedback loop.</title>
        <authorList>
            <person name="Liu Y."/>
            <person name="Du M."/>
            <person name="Deng L."/>
            <person name="Shen J."/>
            <person name="Fang M."/>
            <person name="Chen Q."/>
            <person name="Lu Y."/>
            <person name="Wang Q."/>
            <person name="Li C."/>
            <person name="Zhai Q."/>
        </authorList>
    </citation>
    <scope>FUNCTION</scope>
    <scope>INDUCTION</scope>
</reference>
<comment type="function">
    <text evidence="3">Transcription factor that negatively regulates jasmonate (JA) signaling (PubMed:30610166). Negatively regulates JA-dependent response to wounding, JA-induced expression of defense genes, JA-dependent responses against herbivorous insects, and JA-dependent resistance against Botrytis cinerea infection (PubMed:30610166). Plays a positive role in resistance against the bacterial pathogen Pseudomonas syringae pv tomato DC3000 (PubMed:30610166).</text>
</comment>
<comment type="subcellular location">
    <subcellularLocation>
        <location evidence="1">Nucleus</location>
    </subcellularLocation>
</comment>
<comment type="induction">
    <text evidence="3">Induced by wounding, feeding with herbivorous insects, infection with the fungal pathogen Botrytis cinerea and infection with the bacterial pathogen Pseudomonas syringae pv tomato DC3000.</text>
</comment>
<comment type="caution">
    <text evidence="1">Contains a degenerate basic motif not likely to bind DNA.</text>
</comment>
<organism>
    <name type="scientific">Solanum lycopersicum</name>
    <name type="common">Tomato</name>
    <name type="synonym">Lycopersicon esculentum</name>
    <dbReference type="NCBI Taxonomy" id="4081"/>
    <lineage>
        <taxon>Eukaryota</taxon>
        <taxon>Viridiplantae</taxon>
        <taxon>Streptophyta</taxon>
        <taxon>Embryophyta</taxon>
        <taxon>Tracheophyta</taxon>
        <taxon>Spermatophyta</taxon>
        <taxon>Magnoliopsida</taxon>
        <taxon>eudicotyledons</taxon>
        <taxon>Gunneridae</taxon>
        <taxon>Pentapetalae</taxon>
        <taxon>asterids</taxon>
        <taxon>lamiids</taxon>
        <taxon>Solanales</taxon>
        <taxon>Solanaceae</taxon>
        <taxon>Solanoideae</taxon>
        <taxon>Solaneae</taxon>
        <taxon>Solanum</taxon>
        <taxon>Solanum subgen. Lycopersicon</taxon>
    </lineage>
</organism>
<accession>A0A3Q7H216</accession>
<sequence>MAEKFFLKGEDKVNMEGVLGSEAVEFFSWSASNHMLTEFTSSRGDLGVQQALCKIVEGSDWTYAIYWQVAKSKSGKSALIWGDGHCRETKIGQGEGANDSAHQKMMDGNKKKMVLQKIHTCFGGSEDDNIAAKLESVSDVEVFYLTSMYYIFPFDKPSSPSQSFNSARSIWGSDLKGCLEHFQSRSYLAKLARFETLVFVPLKSGVVELGSVKSIPEDQNLIQMVKTSVVVSNPPQPKANTKIFGRELSLGGAKSGPISINFSPKVEEELSFASDSYEVQAALGSSQVYGNSSNGYRSDEGEGKLYKEELDERKPRKRGRKPANGREEALNHVEAERQRREKLNQRFYALRAVVPNISKMDKASLLGDAIAYITDLQARIRVLDAEKEMVGDKQKQQVILEIDFHQRQDDAVVRVGCPLNAHPVSRVLKTFQEHQVVAQESNVSLTENGELVHMFSIRAPGPAAEDLKEKLTAASRFALKTRWSVSVIRLLCFARLFVYEHQCLAGKFALYFVDYTI</sequence>
<proteinExistence type="evidence at transcript level"/>
<protein>
    <recommendedName>
        <fullName evidence="5">Transcription factor MTB3</fullName>
    </recommendedName>
    <alternativeName>
        <fullName evidence="4">Basic helix-loop-helix protein 138</fullName>
    </alternativeName>
    <alternativeName>
        <fullName evidence="5">Protein MYC2-TARGETED BHLH 3</fullName>
    </alternativeName>
    <alternativeName>
        <fullName evidence="4">Transcription factor bHLH138</fullName>
    </alternativeName>
    <alternativeName>
        <fullName evidence="6">bHLH transcription factor bHLH138</fullName>
    </alternativeName>
</protein>
<name>MTB3_SOLLC</name>
<keyword id="KW-1184">Jasmonic acid signaling pathway</keyword>
<keyword id="KW-0539">Nucleus</keyword>
<keyword id="KW-0611">Plant defense</keyword>
<keyword id="KW-1185">Reference proteome</keyword>
<keyword id="KW-0804">Transcription</keyword>
<keyword id="KW-0805">Transcription regulation</keyword>
<feature type="chain" id="PRO_0000447550" description="Transcription factor MTB3">
    <location>
        <begin position="1"/>
        <end position="517"/>
    </location>
</feature>
<feature type="domain" description="bHLH" evidence="1">
    <location>
        <begin position="327"/>
        <end position="376"/>
    </location>
</feature>
<feature type="region of interest" description="Disordered" evidence="2">
    <location>
        <begin position="290"/>
        <end position="331"/>
    </location>
</feature>
<feature type="region of interest" description="Basic motif; degenerate" evidence="1">
    <location>
        <begin position="327"/>
        <end position="340"/>
    </location>
</feature>
<feature type="region of interest" description="Helix-loop-helix motif" evidence="1">
    <location>
        <begin position="341"/>
        <end position="376"/>
    </location>
</feature>
<feature type="compositionally biased region" description="Basic and acidic residues" evidence="2">
    <location>
        <begin position="297"/>
        <end position="314"/>
    </location>
</feature>
<gene>
    <name evidence="5" type="primary">MTB3</name>
    <name evidence="4" type="synonym">BHLH138</name>
    <name evidence="6" type="ordered locus">Solyc06g083980</name>
</gene>